<reference key="1">
    <citation type="journal article" date="2000" name="Nature">
        <title>Sequence and analysis of chromosome 3 of the plant Arabidopsis thaliana.</title>
        <authorList>
            <person name="Salanoubat M."/>
            <person name="Lemcke K."/>
            <person name="Rieger M."/>
            <person name="Ansorge W."/>
            <person name="Unseld M."/>
            <person name="Fartmann B."/>
            <person name="Valle G."/>
            <person name="Bloecker H."/>
            <person name="Perez-Alonso M."/>
            <person name="Obermaier B."/>
            <person name="Delseny M."/>
            <person name="Boutry M."/>
            <person name="Grivell L.A."/>
            <person name="Mache R."/>
            <person name="Puigdomenech P."/>
            <person name="De Simone V."/>
            <person name="Choisne N."/>
            <person name="Artiguenave F."/>
            <person name="Robert C."/>
            <person name="Brottier P."/>
            <person name="Wincker P."/>
            <person name="Cattolico L."/>
            <person name="Weissenbach J."/>
            <person name="Saurin W."/>
            <person name="Quetier F."/>
            <person name="Schaefer M."/>
            <person name="Mueller-Auer S."/>
            <person name="Gabel C."/>
            <person name="Fuchs M."/>
            <person name="Benes V."/>
            <person name="Wurmbach E."/>
            <person name="Drzonek H."/>
            <person name="Erfle H."/>
            <person name="Jordan N."/>
            <person name="Bangert S."/>
            <person name="Wiedelmann R."/>
            <person name="Kranz H."/>
            <person name="Voss H."/>
            <person name="Holland R."/>
            <person name="Brandt P."/>
            <person name="Nyakatura G."/>
            <person name="Vezzi A."/>
            <person name="D'Angelo M."/>
            <person name="Pallavicini A."/>
            <person name="Toppo S."/>
            <person name="Simionati B."/>
            <person name="Conrad A."/>
            <person name="Hornischer K."/>
            <person name="Kauer G."/>
            <person name="Loehnert T.-H."/>
            <person name="Nordsiek G."/>
            <person name="Reichelt J."/>
            <person name="Scharfe M."/>
            <person name="Schoen O."/>
            <person name="Bargues M."/>
            <person name="Terol J."/>
            <person name="Climent J."/>
            <person name="Navarro P."/>
            <person name="Collado C."/>
            <person name="Perez-Perez A."/>
            <person name="Ottenwaelder B."/>
            <person name="Duchemin D."/>
            <person name="Cooke R."/>
            <person name="Laudie M."/>
            <person name="Berger-Llauro C."/>
            <person name="Purnelle B."/>
            <person name="Masuy D."/>
            <person name="de Haan M."/>
            <person name="Maarse A.C."/>
            <person name="Alcaraz J.-P."/>
            <person name="Cottet A."/>
            <person name="Casacuberta E."/>
            <person name="Monfort A."/>
            <person name="Argiriou A."/>
            <person name="Flores M."/>
            <person name="Liguori R."/>
            <person name="Vitale D."/>
            <person name="Mannhaupt G."/>
            <person name="Haase D."/>
            <person name="Schoof H."/>
            <person name="Rudd S."/>
            <person name="Zaccaria P."/>
            <person name="Mewes H.-W."/>
            <person name="Mayer K.F.X."/>
            <person name="Kaul S."/>
            <person name="Town C.D."/>
            <person name="Koo H.L."/>
            <person name="Tallon L.J."/>
            <person name="Jenkins J."/>
            <person name="Rooney T."/>
            <person name="Rizzo M."/>
            <person name="Walts A."/>
            <person name="Utterback T."/>
            <person name="Fujii C.Y."/>
            <person name="Shea T.P."/>
            <person name="Creasy T.H."/>
            <person name="Haas B."/>
            <person name="Maiti R."/>
            <person name="Wu D."/>
            <person name="Peterson J."/>
            <person name="Van Aken S."/>
            <person name="Pai G."/>
            <person name="Militscher J."/>
            <person name="Sellers P."/>
            <person name="Gill J.E."/>
            <person name="Feldblyum T.V."/>
            <person name="Preuss D."/>
            <person name="Lin X."/>
            <person name="Nierman W.C."/>
            <person name="Salzberg S.L."/>
            <person name="White O."/>
            <person name="Venter J.C."/>
            <person name="Fraser C.M."/>
            <person name="Kaneko T."/>
            <person name="Nakamura Y."/>
            <person name="Sato S."/>
            <person name="Kato T."/>
            <person name="Asamizu E."/>
            <person name="Sasamoto S."/>
            <person name="Kimura T."/>
            <person name="Idesawa K."/>
            <person name="Kawashima K."/>
            <person name="Kishida Y."/>
            <person name="Kiyokawa C."/>
            <person name="Kohara M."/>
            <person name="Matsumoto M."/>
            <person name="Matsuno A."/>
            <person name="Muraki A."/>
            <person name="Nakayama S."/>
            <person name="Nakazaki N."/>
            <person name="Shinpo S."/>
            <person name="Takeuchi C."/>
            <person name="Wada T."/>
            <person name="Watanabe A."/>
            <person name="Yamada M."/>
            <person name="Yasuda M."/>
            <person name="Tabata S."/>
        </authorList>
    </citation>
    <scope>NUCLEOTIDE SEQUENCE [LARGE SCALE GENOMIC DNA]</scope>
    <source>
        <strain>cv. Columbia</strain>
    </source>
</reference>
<reference key="2">
    <citation type="journal article" date="2017" name="Plant J.">
        <title>Araport11: a complete reannotation of the Arabidopsis thaliana reference genome.</title>
        <authorList>
            <person name="Cheng C.Y."/>
            <person name="Krishnakumar V."/>
            <person name="Chan A.P."/>
            <person name="Thibaud-Nissen F."/>
            <person name="Schobel S."/>
            <person name="Town C.D."/>
        </authorList>
    </citation>
    <scope>GENOME REANNOTATION</scope>
    <source>
        <strain>cv. Columbia</strain>
    </source>
</reference>
<reference key="3">
    <citation type="submission" date="2006-03" db="EMBL/GenBank/DDBJ databases">
        <title>Arabidopsis ORF clones.</title>
        <authorList>
            <person name="Shinn P."/>
            <person name="Chen H."/>
            <person name="Kim C.J."/>
            <person name="Ecker J.R."/>
        </authorList>
    </citation>
    <scope>NUCLEOTIDE SEQUENCE [LARGE SCALE MRNA]</scope>
    <source>
        <strain>cv. Columbia</strain>
    </source>
</reference>
<reference key="4">
    <citation type="submission" date="2002-03" db="EMBL/GenBank/DDBJ databases">
        <title>Full-length cDNA from Arabidopsis thaliana.</title>
        <authorList>
            <person name="Brover V.V."/>
            <person name="Troukhan M.E."/>
            <person name="Alexandrov N.A."/>
            <person name="Lu Y.-P."/>
            <person name="Flavell R.B."/>
            <person name="Feldmann K.A."/>
        </authorList>
    </citation>
    <scope>NUCLEOTIDE SEQUENCE [LARGE SCALE MRNA]</scope>
</reference>
<reference key="5">
    <citation type="journal article" date="2014" name="Plant Physiol.">
        <title>Functional and evolutionary analysis of the CASPARIAN STRIP MEMBRANE DOMAIN PROTEIN family.</title>
        <authorList>
            <person name="Roppolo D."/>
            <person name="Boeckmann B."/>
            <person name="Pfister A."/>
            <person name="Boutet E."/>
            <person name="Rubio M.C."/>
            <person name="Denervaud-Tendon V."/>
            <person name="Vermeer J.E."/>
            <person name="Gheyselinck J."/>
            <person name="Xenarios I."/>
            <person name="Geldner N."/>
        </authorList>
    </citation>
    <scope>GENE FAMILY</scope>
    <scope>NOMENCLATURE</scope>
</reference>
<protein>
    <recommendedName>
        <fullName>CASP-like protein 4C1</fullName>
        <shortName>AtCASPL4C1</shortName>
    </recommendedName>
</protein>
<name>CSPLJ_ARATH</name>
<comment type="subunit">
    <text evidence="1">Homodimer and heterodimers.</text>
</comment>
<comment type="subcellular location">
    <subcellularLocation>
        <location evidence="1">Cell membrane</location>
        <topology evidence="1">Multi-pass membrane protein</topology>
    </subcellularLocation>
</comment>
<comment type="similarity">
    <text evidence="3">Belongs to the Casparian strip membrane proteins (CASP) family.</text>
</comment>
<dbReference type="EMBL" id="AL132975">
    <property type="protein sequence ID" value="CAB75897.1"/>
    <property type="molecule type" value="Genomic_DNA"/>
</dbReference>
<dbReference type="EMBL" id="CP002686">
    <property type="protein sequence ID" value="AEE79378.1"/>
    <property type="molecule type" value="Genomic_DNA"/>
</dbReference>
<dbReference type="EMBL" id="BT024913">
    <property type="protein sequence ID" value="ABD94069.1"/>
    <property type="molecule type" value="mRNA"/>
</dbReference>
<dbReference type="EMBL" id="AY088394">
    <property type="protein sequence ID" value="AAM65932.1"/>
    <property type="molecule type" value="mRNA"/>
</dbReference>
<dbReference type="PIR" id="T47678">
    <property type="entry name" value="T47678"/>
</dbReference>
<dbReference type="RefSeq" id="NP_191099.1">
    <property type="nucleotide sequence ID" value="NM_115397.3"/>
</dbReference>
<dbReference type="FunCoup" id="Q9M2U0">
    <property type="interactions" value="362"/>
</dbReference>
<dbReference type="STRING" id="3702.Q9M2U0"/>
<dbReference type="iPTMnet" id="Q9M2U0"/>
<dbReference type="PaxDb" id="3702-AT3G55390.1"/>
<dbReference type="ProteomicsDB" id="222709"/>
<dbReference type="EnsemblPlants" id="AT3G55390.1">
    <property type="protein sequence ID" value="AT3G55390.1"/>
    <property type="gene ID" value="AT3G55390"/>
</dbReference>
<dbReference type="GeneID" id="824705"/>
<dbReference type="Gramene" id="AT3G55390.1">
    <property type="protein sequence ID" value="AT3G55390.1"/>
    <property type="gene ID" value="AT3G55390"/>
</dbReference>
<dbReference type="KEGG" id="ath:AT3G55390"/>
<dbReference type="Araport" id="AT3G55390"/>
<dbReference type="TAIR" id="AT3G55390">
    <property type="gene designation" value="CASPL4C1"/>
</dbReference>
<dbReference type="eggNOG" id="ENOG502QQ76">
    <property type="taxonomic scope" value="Eukaryota"/>
</dbReference>
<dbReference type="HOGENOM" id="CLU_1484566_0_0_1"/>
<dbReference type="InParanoid" id="Q9M2U0"/>
<dbReference type="OMA" id="FRVACFI"/>
<dbReference type="OrthoDB" id="1907587at2759"/>
<dbReference type="PhylomeDB" id="Q9M2U0"/>
<dbReference type="PRO" id="PR:Q9M2U0"/>
<dbReference type="Proteomes" id="UP000006548">
    <property type="component" value="Chromosome 3"/>
</dbReference>
<dbReference type="ExpressionAtlas" id="Q9M2U0">
    <property type="expression patterns" value="baseline and differential"/>
</dbReference>
<dbReference type="GO" id="GO:0005886">
    <property type="term" value="C:plasma membrane"/>
    <property type="evidence" value="ECO:0007669"/>
    <property type="project" value="UniProtKB-SubCell"/>
</dbReference>
<dbReference type="InterPro" id="IPR006459">
    <property type="entry name" value="CASP/CASPL"/>
</dbReference>
<dbReference type="InterPro" id="IPR006702">
    <property type="entry name" value="CASP_dom"/>
</dbReference>
<dbReference type="NCBIfam" id="TIGR01569">
    <property type="entry name" value="A_tha_TIGR01569"/>
    <property type="match status" value="1"/>
</dbReference>
<dbReference type="PANTHER" id="PTHR33573">
    <property type="entry name" value="CASP-LIKE PROTEIN 4A4"/>
    <property type="match status" value="1"/>
</dbReference>
<dbReference type="PANTHER" id="PTHR33573:SF56">
    <property type="entry name" value="CASP-LIKE PROTEIN 4C1"/>
    <property type="match status" value="1"/>
</dbReference>
<dbReference type="Pfam" id="PF04535">
    <property type="entry name" value="CASP_dom"/>
    <property type="match status" value="1"/>
</dbReference>
<keyword id="KW-1003">Cell membrane</keyword>
<keyword id="KW-0472">Membrane</keyword>
<keyword id="KW-1185">Reference proteome</keyword>
<keyword id="KW-0812">Transmembrane</keyword>
<keyword id="KW-1133">Transmembrane helix</keyword>
<proteinExistence type="evidence at transcript level"/>
<feature type="chain" id="PRO_0000308672" description="CASP-like protein 4C1">
    <location>
        <begin position="1"/>
        <end position="194"/>
    </location>
</feature>
<feature type="topological domain" description="Cytoplasmic" evidence="2">
    <location>
        <begin position="1"/>
        <end position="35"/>
    </location>
</feature>
<feature type="transmembrane region" description="Helical" evidence="2">
    <location>
        <begin position="36"/>
        <end position="56"/>
    </location>
</feature>
<feature type="topological domain" description="Extracellular" evidence="2">
    <location>
        <begin position="57"/>
        <end position="74"/>
    </location>
</feature>
<feature type="transmembrane region" description="Helical" evidence="2">
    <location>
        <begin position="75"/>
        <end position="95"/>
    </location>
</feature>
<feature type="topological domain" description="Cytoplasmic" evidence="2">
    <location>
        <begin position="96"/>
        <end position="114"/>
    </location>
</feature>
<feature type="transmembrane region" description="Helical" evidence="2">
    <location>
        <begin position="115"/>
        <end position="135"/>
    </location>
</feature>
<feature type="topological domain" description="Extracellular" evidence="2">
    <location>
        <begin position="136"/>
        <end position="157"/>
    </location>
</feature>
<feature type="transmembrane region" description="Helical" evidence="2">
    <location>
        <begin position="158"/>
        <end position="178"/>
    </location>
</feature>
<feature type="topological domain" description="Cytoplasmic" evidence="2">
    <location>
        <begin position="179"/>
        <end position="194"/>
    </location>
</feature>
<organism>
    <name type="scientific">Arabidopsis thaliana</name>
    <name type="common">Mouse-ear cress</name>
    <dbReference type="NCBI Taxonomy" id="3702"/>
    <lineage>
        <taxon>Eukaryota</taxon>
        <taxon>Viridiplantae</taxon>
        <taxon>Streptophyta</taxon>
        <taxon>Embryophyta</taxon>
        <taxon>Tracheophyta</taxon>
        <taxon>Spermatophyta</taxon>
        <taxon>Magnoliopsida</taxon>
        <taxon>eudicotyledons</taxon>
        <taxon>Gunneridae</taxon>
        <taxon>Pentapetalae</taxon>
        <taxon>rosids</taxon>
        <taxon>malvids</taxon>
        <taxon>Brassicales</taxon>
        <taxon>Brassicaceae</taxon>
        <taxon>Camelineae</taxon>
        <taxon>Arabidopsis</taxon>
    </lineage>
</organism>
<sequence length="194" mass="21687">MRSPHAFRNGESPTLRDHTHFHSTVTAQKLRRFNSLILLLRLASFSFSLASAVFMLTNSRGSASPHWYDFDAFRFVFVANAIVALYSVFEMGTCVWEFSRETTLWPEAFQVWFDFGHDQVFSYLLLSAGSAAAALARTMRGGDTCTANKAFCLQSDVAIGLGFAAFLFLAFSSCFSGFRVACFLITGSRFHLYS</sequence>
<accession>Q9M2U0</accession>
<gene>
    <name type="ordered locus">At3g55390</name>
    <name type="ORF">T22E16.50</name>
</gene>
<evidence type="ECO:0000250" key="1"/>
<evidence type="ECO:0000255" key="2"/>
<evidence type="ECO:0000305" key="3"/>